<organism>
    <name type="scientific">Rickettsia prowazekii (strain Madrid E)</name>
    <dbReference type="NCBI Taxonomy" id="272947"/>
    <lineage>
        <taxon>Bacteria</taxon>
        <taxon>Pseudomonadati</taxon>
        <taxon>Pseudomonadota</taxon>
        <taxon>Alphaproteobacteria</taxon>
        <taxon>Rickettsiales</taxon>
        <taxon>Rickettsiaceae</taxon>
        <taxon>Rickettsieae</taxon>
        <taxon>Rickettsia</taxon>
        <taxon>typhus group</taxon>
    </lineage>
</organism>
<proteinExistence type="inferred from homology"/>
<keyword id="KW-0479">Metal-binding</keyword>
<keyword id="KW-0511">Multifunctional enzyme</keyword>
<keyword id="KW-0521">NADP</keyword>
<keyword id="KW-0560">Oxidoreductase</keyword>
<keyword id="KW-1185">Reference proteome</keyword>
<sequence>MDEMNKINYTEALEYHEKDKPGKIAITTTKSLVTQQDLSLAYSPGVAAPCLEISKNLEAVYKYTSRSNLVAVISNGTAVLGLGNLGAAASKPVMEGKAVLFKKFADIDAIDLEVNTEDPIEFINAVKYLGYSFGGINLEDIKAPECFLIEEKLKSLMDIPVFHDDQHGTAIITAAGLINAAYLTNRTLKDLKIVINGAGAAAIACIDLLIALGVDKSKIILCDTKGVIYKGRTSGMNKWKERYASDTKIRTLTESLNNADVFIGLSVKGAVTKDMISKMAHKPIIFAMANPDPEITPEDIKFVRDDAIIATGRSDYNNQVNNVMGFPYIFRGALDVRASTINTEMKIAAARAIADLARRPVPEEVYKAYSGRKMVFGNEYIIPVPFDPRLITVVATAVAVAAIESGVARVKDFSIDKYKQQLGSRLNPTANYMNFLAEKIHNVPLKRIVFAEGEEEEVISAALMMRDEKYGNPIIIGRVERIEVTLKKIGKDISLAGIQIMNAALSDRLEQYTDYLYKRLQRKGYLYRDCAKLVKTDKNIFAACMVACGDGDALLTGVTKSYIDSLEDIIKVISPKQNRRILGYSIMIAKDHNIIIADNCITEYPNSLELAQIATQTAEIAKNMGITPRVALIAFSTFGNSSQEKTVRIREAVNILDNFSKDKKKLNGIKVDFEYDGEMSVKVALDHDLRKLYQFCRLSGSANVLIMPGLNSAAISTELLQKFSSNSFIGPITNGFAKPVQILPTTATANEILKIATFACVEAIKEV</sequence>
<evidence type="ECO:0000250" key="1"/>
<evidence type="ECO:0000250" key="2">
    <source>
        <dbReference type="UniProtKB" id="P40927"/>
    </source>
</evidence>
<evidence type="ECO:0000305" key="3"/>
<dbReference type="EC" id="1.1.1.40"/>
<dbReference type="EMBL" id="AJ235271">
    <property type="protein sequence ID" value="CAA14832.1"/>
    <property type="molecule type" value="Genomic_DNA"/>
</dbReference>
<dbReference type="PIR" id="F71694">
    <property type="entry name" value="F71694"/>
</dbReference>
<dbReference type="RefSeq" id="NP_220756.1">
    <property type="nucleotide sequence ID" value="NC_000963.1"/>
</dbReference>
<dbReference type="RefSeq" id="WP_004597525.1">
    <property type="nucleotide sequence ID" value="NC_000963.1"/>
</dbReference>
<dbReference type="SMR" id="Q9ZDF6"/>
<dbReference type="STRING" id="272947.gene:17555453"/>
<dbReference type="EnsemblBacteria" id="CAA14832">
    <property type="protein sequence ID" value="CAA14832"/>
    <property type="gene ID" value="CAA14832"/>
</dbReference>
<dbReference type="KEGG" id="rpr:RP373"/>
<dbReference type="PATRIC" id="fig|272947.5.peg.384"/>
<dbReference type="eggNOG" id="COG0280">
    <property type="taxonomic scope" value="Bacteria"/>
</dbReference>
<dbReference type="eggNOG" id="COG0281">
    <property type="taxonomic scope" value="Bacteria"/>
</dbReference>
<dbReference type="HOGENOM" id="CLU_012366_0_0_5"/>
<dbReference type="OrthoDB" id="9805787at2"/>
<dbReference type="Proteomes" id="UP000002480">
    <property type="component" value="Chromosome"/>
</dbReference>
<dbReference type="GO" id="GO:0016746">
    <property type="term" value="F:acyltransferase activity"/>
    <property type="evidence" value="ECO:0007669"/>
    <property type="project" value="InterPro"/>
</dbReference>
<dbReference type="GO" id="GO:0004473">
    <property type="term" value="F:malate dehydrogenase (decarboxylating) (NADP+) activity"/>
    <property type="evidence" value="ECO:0007669"/>
    <property type="project" value="UniProtKB-EC"/>
</dbReference>
<dbReference type="GO" id="GO:0046872">
    <property type="term" value="F:metal ion binding"/>
    <property type="evidence" value="ECO:0007669"/>
    <property type="project" value="UniProtKB-KW"/>
</dbReference>
<dbReference type="GO" id="GO:0051287">
    <property type="term" value="F:NAD binding"/>
    <property type="evidence" value="ECO:0007669"/>
    <property type="project" value="InterPro"/>
</dbReference>
<dbReference type="GO" id="GO:0008948">
    <property type="term" value="F:oxaloacetate decarboxylase activity"/>
    <property type="evidence" value="ECO:0007669"/>
    <property type="project" value="RHEA"/>
</dbReference>
<dbReference type="GO" id="GO:0006108">
    <property type="term" value="P:malate metabolic process"/>
    <property type="evidence" value="ECO:0007669"/>
    <property type="project" value="InterPro"/>
</dbReference>
<dbReference type="CDD" id="cd05311">
    <property type="entry name" value="NAD_bind_2_malic_enz"/>
    <property type="match status" value="1"/>
</dbReference>
<dbReference type="FunFam" id="3.40.50.10380:FF:000003">
    <property type="entry name" value="NADP-dependent malic enzyme"/>
    <property type="match status" value="1"/>
</dbReference>
<dbReference type="FunFam" id="3.40.50.720:FF:000095">
    <property type="entry name" value="NADP-dependent malic enzyme"/>
    <property type="match status" value="1"/>
</dbReference>
<dbReference type="Gene3D" id="3.40.50.10950">
    <property type="match status" value="1"/>
</dbReference>
<dbReference type="Gene3D" id="3.40.50.10750">
    <property type="entry name" value="Isocitrate/Isopropylmalate dehydrogenase-like"/>
    <property type="match status" value="1"/>
</dbReference>
<dbReference type="Gene3D" id="3.40.50.10380">
    <property type="entry name" value="Malic enzyme, N-terminal domain"/>
    <property type="match status" value="1"/>
</dbReference>
<dbReference type="Gene3D" id="3.40.50.720">
    <property type="entry name" value="NAD(P)-binding Rossmann-like Domain"/>
    <property type="match status" value="1"/>
</dbReference>
<dbReference type="InterPro" id="IPR046346">
    <property type="entry name" value="Aminoacid_DH-like_N_sf"/>
</dbReference>
<dbReference type="InterPro" id="IPR051674">
    <property type="entry name" value="Malate_Decarboxylase"/>
</dbReference>
<dbReference type="InterPro" id="IPR015884">
    <property type="entry name" value="Malic_enzyme_CS"/>
</dbReference>
<dbReference type="InterPro" id="IPR012301">
    <property type="entry name" value="Malic_N_dom"/>
</dbReference>
<dbReference type="InterPro" id="IPR037062">
    <property type="entry name" value="Malic_N_dom_sf"/>
</dbReference>
<dbReference type="InterPro" id="IPR012302">
    <property type="entry name" value="Malic_NAD-bd"/>
</dbReference>
<dbReference type="InterPro" id="IPR045213">
    <property type="entry name" value="Malic_NAD-bd_bact_type"/>
</dbReference>
<dbReference type="InterPro" id="IPR012188">
    <property type="entry name" value="ME_PTA"/>
</dbReference>
<dbReference type="InterPro" id="IPR036291">
    <property type="entry name" value="NAD(P)-bd_dom_sf"/>
</dbReference>
<dbReference type="InterPro" id="IPR042113">
    <property type="entry name" value="P_AcTrfase_dom1"/>
</dbReference>
<dbReference type="InterPro" id="IPR042112">
    <property type="entry name" value="P_AcTrfase_dom2"/>
</dbReference>
<dbReference type="InterPro" id="IPR002505">
    <property type="entry name" value="PTA_PTB"/>
</dbReference>
<dbReference type="PANTHER" id="PTHR43237">
    <property type="entry name" value="NADP-DEPENDENT MALIC ENZYME"/>
    <property type="match status" value="1"/>
</dbReference>
<dbReference type="PANTHER" id="PTHR43237:SF4">
    <property type="entry name" value="NADP-DEPENDENT MALIC ENZYME"/>
    <property type="match status" value="1"/>
</dbReference>
<dbReference type="Pfam" id="PF00390">
    <property type="entry name" value="malic"/>
    <property type="match status" value="1"/>
</dbReference>
<dbReference type="Pfam" id="PF03949">
    <property type="entry name" value="Malic_M"/>
    <property type="match status" value="1"/>
</dbReference>
<dbReference type="Pfam" id="PF01515">
    <property type="entry name" value="PTA_PTB"/>
    <property type="match status" value="1"/>
</dbReference>
<dbReference type="PIRSF" id="PIRSF036684">
    <property type="entry name" value="ME_PTA"/>
    <property type="match status" value="1"/>
</dbReference>
<dbReference type="SMART" id="SM01274">
    <property type="entry name" value="malic"/>
    <property type="match status" value="1"/>
</dbReference>
<dbReference type="SMART" id="SM00919">
    <property type="entry name" value="Malic_M"/>
    <property type="match status" value="1"/>
</dbReference>
<dbReference type="SUPFAM" id="SSF53223">
    <property type="entry name" value="Aminoacid dehydrogenase-like, N-terminal domain"/>
    <property type="match status" value="1"/>
</dbReference>
<dbReference type="SUPFAM" id="SSF53659">
    <property type="entry name" value="Isocitrate/Isopropylmalate dehydrogenase-like"/>
    <property type="match status" value="1"/>
</dbReference>
<dbReference type="SUPFAM" id="SSF51735">
    <property type="entry name" value="NAD(P)-binding Rossmann-fold domains"/>
    <property type="match status" value="1"/>
</dbReference>
<dbReference type="PROSITE" id="PS00331">
    <property type="entry name" value="MALIC_ENZYMES"/>
    <property type="match status" value="1"/>
</dbReference>
<reference key="1">
    <citation type="journal article" date="1998" name="Nature">
        <title>The genome sequence of Rickettsia prowazekii and the origin of mitochondria.</title>
        <authorList>
            <person name="Andersson S.G.E."/>
            <person name="Zomorodipour A."/>
            <person name="Andersson J.O."/>
            <person name="Sicheritz-Ponten T."/>
            <person name="Alsmark U.C.M."/>
            <person name="Podowski R.M."/>
            <person name="Naeslund A.K."/>
            <person name="Eriksson A.-S."/>
            <person name="Winkler H.H."/>
            <person name="Kurland C.G."/>
        </authorList>
    </citation>
    <scope>NUCLEOTIDE SEQUENCE [LARGE SCALE GENOMIC DNA]</scope>
    <source>
        <strain>Madrid E</strain>
    </source>
</reference>
<accession>Q9ZDF6</accession>
<name>MAO2_RICPR</name>
<gene>
    <name type="ordered locus">RP373</name>
</gene>
<feature type="chain" id="PRO_0000160247" description="Probable NADP-dependent malic enzyme">
    <location>
        <begin position="1"/>
        <end position="767"/>
    </location>
</feature>
<feature type="region of interest" description="Malic enzyme">
    <location>
        <begin position="1"/>
        <end position="430"/>
    </location>
</feature>
<feature type="region of interest" description="Phosphate acetyltransferase">
    <location>
        <begin position="431"/>
        <end position="767"/>
    </location>
</feature>
<feature type="active site" description="Proton donor" evidence="2">
    <location>
        <position position="42"/>
    </location>
</feature>
<feature type="active site" description="Proton acceptor" evidence="2">
    <location>
        <position position="97"/>
    </location>
</feature>
<feature type="binding site" evidence="2">
    <location>
        <position position="139"/>
    </location>
    <ligand>
        <name>a divalent metal cation</name>
        <dbReference type="ChEBI" id="CHEBI:60240"/>
    </ligand>
</feature>
<feature type="binding site" evidence="2">
    <location>
        <position position="140"/>
    </location>
    <ligand>
        <name>a divalent metal cation</name>
        <dbReference type="ChEBI" id="CHEBI:60240"/>
    </ligand>
</feature>
<feature type="binding site" evidence="2">
    <location>
        <position position="165"/>
    </location>
    <ligand>
        <name>a divalent metal cation</name>
        <dbReference type="ChEBI" id="CHEBI:60240"/>
    </ligand>
</feature>
<feature type="binding site" evidence="2">
    <location>
        <begin position="198"/>
        <end position="201"/>
    </location>
    <ligand>
        <name>NADP(+)</name>
        <dbReference type="ChEBI" id="CHEBI:58349"/>
    </ligand>
</feature>
<feature type="binding site" evidence="2">
    <location>
        <position position="290"/>
    </location>
    <ligand>
        <name>NADP(+)</name>
        <dbReference type="ChEBI" id="CHEBI:58349"/>
    </ligand>
</feature>
<feature type="binding site" evidence="2">
    <location>
        <position position="322"/>
    </location>
    <ligand>
        <name>NADP(+)</name>
        <dbReference type="ChEBI" id="CHEBI:58349"/>
    </ligand>
</feature>
<protein>
    <recommendedName>
        <fullName>Probable NADP-dependent malic enzyme</fullName>
        <shortName>NADP-ME</shortName>
        <ecNumber>1.1.1.40</ecNumber>
    </recommendedName>
</protein>
<comment type="catalytic activity">
    <reaction>
        <text>(S)-malate + NADP(+) = pyruvate + CO2 + NADPH</text>
        <dbReference type="Rhea" id="RHEA:18253"/>
        <dbReference type="ChEBI" id="CHEBI:15361"/>
        <dbReference type="ChEBI" id="CHEBI:15589"/>
        <dbReference type="ChEBI" id="CHEBI:16526"/>
        <dbReference type="ChEBI" id="CHEBI:57783"/>
        <dbReference type="ChEBI" id="CHEBI:58349"/>
        <dbReference type="EC" id="1.1.1.40"/>
    </reaction>
</comment>
<comment type="catalytic activity">
    <reaction>
        <text>oxaloacetate + H(+) = pyruvate + CO2</text>
        <dbReference type="Rhea" id="RHEA:15641"/>
        <dbReference type="ChEBI" id="CHEBI:15361"/>
        <dbReference type="ChEBI" id="CHEBI:15378"/>
        <dbReference type="ChEBI" id="CHEBI:16452"/>
        <dbReference type="ChEBI" id="CHEBI:16526"/>
        <dbReference type="EC" id="1.1.1.40"/>
    </reaction>
</comment>
<comment type="cofactor">
    <cofactor evidence="1">
        <name>Mg(2+)</name>
        <dbReference type="ChEBI" id="CHEBI:18420"/>
    </cofactor>
    <cofactor evidence="1">
        <name>Mn(2+)</name>
        <dbReference type="ChEBI" id="CHEBI:29035"/>
    </cofactor>
    <text evidence="1">Divalent metal cations. Prefers magnesium or manganese.</text>
</comment>
<comment type="similarity">
    <text evidence="3">In the N-terminal section; belongs to the malic enzymes family.</text>
</comment>
<comment type="similarity">
    <text evidence="3">In the C-terminal section; belongs to the phosphate acetyltransferase and butyryltransferase family.</text>
</comment>